<name>DAPE_BUCCC</name>
<comment type="function">
    <text evidence="1">Catalyzes the hydrolysis of N-succinyl-L,L-diaminopimelic acid (SDAP), forming succinate and LL-2,6-diaminopimelate (DAP), an intermediate involved in the bacterial biosynthesis of lysine and meso-diaminopimelic acid, an essential component of bacterial cell walls.</text>
</comment>
<comment type="catalytic activity">
    <reaction evidence="1">
        <text>N-succinyl-(2S,6S)-2,6-diaminopimelate + H2O = (2S,6S)-2,6-diaminopimelate + succinate</text>
        <dbReference type="Rhea" id="RHEA:22608"/>
        <dbReference type="ChEBI" id="CHEBI:15377"/>
        <dbReference type="ChEBI" id="CHEBI:30031"/>
        <dbReference type="ChEBI" id="CHEBI:57609"/>
        <dbReference type="ChEBI" id="CHEBI:58087"/>
        <dbReference type="EC" id="3.5.1.18"/>
    </reaction>
</comment>
<comment type="cofactor">
    <cofactor evidence="1">
        <name>Zn(2+)</name>
        <dbReference type="ChEBI" id="CHEBI:29105"/>
    </cofactor>
    <cofactor evidence="1">
        <name>Co(2+)</name>
        <dbReference type="ChEBI" id="CHEBI:48828"/>
    </cofactor>
    <text evidence="1">Binds 2 Zn(2+) or Co(2+) ions per subunit.</text>
</comment>
<comment type="pathway">
    <text evidence="1">Amino-acid biosynthesis; L-lysine biosynthesis via DAP pathway; LL-2,6-diaminopimelate from (S)-tetrahydrodipicolinate (succinylase route): step 3/3.</text>
</comment>
<comment type="subunit">
    <text evidence="1">Homodimer.</text>
</comment>
<comment type="similarity">
    <text evidence="1">Belongs to the peptidase M20A family. DapE subfamily.</text>
</comment>
<keyword id="KW-0028">Amino-acid biosynthesis</keyword>
<keyword id="KW-0170">Cobalt</keyword>
<keyword id="KW-0220">Diaminopimelate biosynthesis</keyword>
<keyword id="KW-0378">Hydrolase</keyword>
<keyword id="KW-0457">Lysine biosynthesis</keyword>
<keyword id="KW-0479">Metal-binding</keyword>
<keyword id="KW-1185">Reference proteome</keyword>
<keyword id="KW-0862">Zinc</keyword>
<organism>
    <name type="scientific">Buchnera aphidicola subsp. Cinara cedri (strain Cc)</name>
    <dbReference type="NCBI Taxonomy" id="372461"/>
    <lineage>
        <taxon>Bacteria</taxon>
        <taxon>Pseudomonadati</taxon>
        <taxon>Pseudomonadota</taxon>
        <taxon>Gammaproteobacteria</taxon>
        <taxon>Enterobacterales</taxon>
        <taxon>Erwiniaceae</taxon>
        <taxon>Buchnera</taxon>
    </lineage>
</organism>
<sequence length="376" mass="42866">MHTNVLNLSKKLINISSISPRDLGCQEILIKRLQLLGFFIERINLKDTKNFWAYRGKGKTVTFLGHTDVVPAGSTRKWKTSPFVATIKDGKLFGRGSADMKGSIAAMLIAVENFIKKFPNHKGRISFLITSDEETSGKNGIRKVVSILKEKKEVIDFCLVGEPTSEKILGDCVKNGRRGSLSADLMIYGTQGHIAYPKLFLNPIHNSIPFLLDLSNLIFDKGNLFFEPTSIQISKIFSEKNCTLNMIPGELRVFFNIRFNTLVNKKKIIRIVENLLNKYLIKYSIFWTYHAKPFLSSSNFLLNLLTKCIYKHTNIIPKIKNNGGTSDARFIFNLTDKIIEFGLPNLTIHKVNEYVYINDLLKLQNIYYSFLEKLLL</sequence>
<evidence type="ECO:0000255" key="1">
    <source>
        <dbReference type="HAMAP-Rule" id="MF_01690"/>
    </source>
</evidence>
<reference key="1">
    <citation type="journal article" date="2006" name="Science">
        <title>A small microbial genome: the end of a long symbiotic relationship?</title>
        <authorList>
            <person name="Perez-Brocal V."/>
            <person name="Gil R."/>
            <person name="Ramos S."/>
            <person name="Lamelas A."/>
            <person name="Postigo M."/>
            <person name="Michelena J.M."/>
            <person name="Silva F.J."/>
            <person name="Moya A."/>
            <person name="Latorre A."/>
        </authorList>
    </citation>
    <scope>NUCLEOTIDE SEQUENCE [LARGE SCALE GENOMIC DNA]</scope>
    <source>
        <strain>Cc</strain>
    </source>
</reference>
<gene>
    <name evidence="1" type="primary">dapE</name>
    <name type="ordered locus">BCc_059</name>
</gene>
<dbReference type="EC" id="3.5.1.18" evidence="1"/>
<dbReference type="EMBL" id="CP000263">
    <property type="protein sequence ID" value="ABJ90537.1"/>
    <property type="molecule type" value="Genomic_DNA"/>
</dbReference>
<dbReference type="RefSeq" id="WP_011672456.1">
    <property type="nucleotide sequence ID" value="NC_008513.1"/>
</dbReference>
<dbReference type="SMR" id="Q058B2"/>
<dbReference type="STRING" id="372461.BCc_059"/>
<dbReference type="KEGG" id="bcc:BCc_059"/>
<dbReference type="eggNOG" id="COG0624">
    <property type="taxonomic scope" value="Bacteria"/>
</dbReference>
<dbReference type="HOGENOM" id="CLU_021802_4_0_6"/>
<dbReference type="OrthoDB" id="9809784at2"/>
<dbReference type="UniPathway" id="UPA00034">
    <property type="reaction ID" value="UER00021"/>
</dbReference>
<dbReference type="Proteomes" id="UP000000669">
    <property type="component" value="Chromosome"/>
</dbReference>
<dbReference type="GO" id="GO:0008777">
    <property type="term" value="F:acetylornithine deacetylase activity"/>
    <property type="evidence" value="ECO:0007669"/>
    <property type="project" value="TreeGrafter"/>
</dbReference>
<dbReference type="GO" id="GO:0050897">
    <property type="term" value="F:cobalt ion binding"/>
    <property type="evidence" value="ECO:0007669"/>
    <property type="project" value="UniProtKB-UniRule"/>
</dbReference>
<dbReference type="GO" id="GO:0009014">
    <property type="term" value="F:succinyl-diaminopimelate desuccinylase activity"/>
    <property type="evidence" value="ECO:0007669"/>
    <property type="project" value="UniProtKB-UniRule"/>
</dbReference>
<dbReference type="GO" id="GO:0008270">
    <property type="term" value="F:zinc ion binding"/>
    <property type="evidence" value="ECO:0007669"/>
    <property type="project" value="UniProtKB-UniRule"/>
</dbReference>
<dbReference type="GO" id="GO:0019877">
    <property type="term" value="P:diaminopimelate biosynthetic process"/>
    <property type="evidence" value="ECO:0007669"/>
    <property type="project" value="UniProtKB-UniRule"/>
</dbReference>
<dbReference type="GO" id="GO:0006526">
    <property type="term" value="P:L-arginine biosynthetic process"/>
    <property type="evidence" value="ECO:0007669"/>
    <property type="project" value="TreeGrafter"/>
</dbReference>
<dbReference type="GO" id="GO:0009089">
    <property type="term" value="P:lysine biosynthetic process via diaminopimelate"/>
    <property type="evidence" value="ECO:0007669"/>
    <property type="project" value="UniProtKB-UniRule"/>
</dbReference>
<dbReference type="CDD" id="cd03891">
    <property type="entry name" value="M20_DapE_proteobac"/>
    <property type="match status" value="1"/>
</dbReference>
<dbReference type="Gene3D" id="3.40.630.10">
    <property type="entry name" value="Zn peptidases"/>
    <property type="match status" value="2"/>
</dbReference>
<dbReference type="HAMAP" id="MF_01690">
    <property type="entry name" value="DapE"/>
    <property type="match status" value="1"/>
</dbReference>
<dbReference type="InterPro" id="IPR001261">
    <property type="entry name" value="ArgE/DapE_CS"/>
</dbReference>
<dbReference type="InterPro" id="IPR036264">
    <property type="entry name" value="Bact_exopeptidase_dim_dom"/>
</dbReference>
<dbReference type="InterPro" id="IPR005941">
    <property type="entry name" value="DapE_proteobac"/>
</dbReference>
<dbReference type="InterPro" id="IPR002933">
    <property type="entry name" value="Peptidase_M20"/>
</dbReference>
<dbReference type="InterPro" id="IPR011650">
    <property type="entry name" value="Peptidase_M20_dimer"/>
</dbReference>
<dbReference type="InterPro" id="IPR050072">
    <property type="entry name" value="Peptidase_M20A"/>
</dbReference>
<dbReference type="NCBIfam" id="TIGR01246">
    <property type="entry name" value="dapE_proteo"/>
    <property type="match status" value="1"/>
</dbReference>
<dbReference type="NCBIfam" id="NF009557">
    <property type="entry name" value="PRK13009.1"/>
    <property type="match status" value="1"/>
</dbReference>
<dbReference type="PANTHER" id="PTHR43808">
    <property type="entry name" value="ACETYLORNITHINE DEACETYLASE"/>
    <property type="match status" value="1"/>
</dbReference>
<dbReference type="PANTHER" id="PTHR43808:SF31">
    <property type="entry name" value="N-ACETYL-L-CITRULLINE DEACETYLASE"/>
    <property type="match status" value="1"/>
</dbReference>
<dbReference type="Pfam" id="PF07687">
    <property type="entry name" value="M20_dimer"/>
    <property type="match status" value="1"/>
</dbReference>
<dbReference type="Pfam" id="PF01546">
    <property type="entry name" value="Peptidase_M20"/>
    <property type="match status" value="1"/>
</dbReference>
<dbReference type="SUPFAM" id="SSF55031">
    <property type="entry name" value="Bacterial exopeptidase dimerisation domain"/>
    <property type="match status" value="1"/>
</dbReference>
<dbReference type="SUPFAM" id="SSF53187">
    <property type="entry name" value="Zn-dependent exopeptidases"/>
    <property type="match status" value="1"/>
</dbReference>
<dbReference type="PROSITE" id="PS00759">
    <property type="entry name" value="ARGE_DAPE_CPG2_2"/>
    <property type="match status" value="1"/>
</dbReference>
<proteinExistence type="inferred from homology"/>
<protein>
    <recommendedName>
        <fullName evidence="1">Succinyl-diaminopimelate desuccinylase</fullName>
        <shortName evidence="1">SDAP desuccinylase</shortName>
        <ecNumber evidence="1">3.5.1.18</ecNumber>
    </recommendedName>
    <alternativeName>
        <fullName evidence="1">N-succinyl-LL-2,6-diaminoheptanedioate amidohydrolase</fullName>
    </alternativeName>
</protein>
<feature type="chain" id="PRO_0000375494" description="Succinyl-diaminopimelate desuccinylase">
    <location>
        <begin position="1"/>
        <end position="376"/>
    </location>
</feature>
<feature type="active site" evidence="1">
    <location>
        <position position="68"/>
    </location>
</feature>
<feature type="active site" description="Proton acceptor" evidence="1">
    <location>
        <position position="133"/>
    </location>
</feature>
<feature type="binding site" evidence="1">
    <location>
        <position position="66"/>
    </location>
    <ligand>
        <name>Zn(2+)</name>
        <dbReference type="ChEBI" id="CHEBI:29105"/>
        <label>1</label>
    </ligand>
</feature>
<feature type="binding site" evidence="1">
    <location>
        <position position="99"/>
    </location>
    <ligand>
        <name>Zn(2+)</name>
        <dbReference type="ChEBI" id="CHEBI:29105"/>
        <label>1</label>
    </ligand>
</feature>
<feature type="binding site" evidence="1">
    <location>
        <position position="99"/>
    </location>
    <ligand>
        <name>Zn(2+)</name>
        <dbReference type="ChEBI" id="CHEBI:29105"/>
        <label>2</label>
    </ligand>
</feature>
<feature type="binding site" evidence="1">
    <location>
        <position position="134"/>
    </location>
    <ligand>
        <name>Zn(2+)</name>
        <dbReference type="ChEBI" id="CHEBI:29105"/>
        <label>2</label>
    </ligand>
</feature>
<feature type="binding site" evidence="1">
    <location>
        <position position="162"/>
    </location>
    <ligand>
        <name>Zn(2+)</name>
        <dbReference type="ChEBI" id="CHEBI:29105"/>
        <label>1</label>
    </ligand>
</feature>
<feature type="binding site" evidence="1">
    <location>
        <position position="349"/>
    </location>
    <ligand>
        <name>Zn(2+)</name>
        <dbReference type="ChEBI" id="CHEBI:29105"/>
        <label>2</label>
    </ligand>
</feature>
<accession>Q058B2</accession>